<reference key="1">
    <citation type="submission" date="2007-05" db="EMBL/GenBank/DDBJ databases">
        <title>Complete sequence of chromosome of Staphylococcus aureus subsp. aureus JH9.</title>
        <authorList>
            <consortium name="US DOE Joint Genome Institute"/>
            <person name="Copeland A."/>
            <person name="Lucas S."/>
            <person name="Lapidus A."/>
            <person name="Barry K."/>
            <person name="Detter J.C."/>
            <person name="Glavina del Rio T."/>
            <person name="Hammon N."/>
            <person name="Israni S."/>
            <person name="Pitluck S."/>
            <person name="Chain P."/>
            <person name="Malfatti S."/>
            <person name="Shin M."/>
            <person name="Vergez L."/>
            <person name="Schmutz J."/>
            <person name="Larimer F."/>
            <person name="Land M."/>
            <person name="Hauser L."/>
            <person name="Kyrpides N."/>
            <person name="Kim E."/>
            <person name="Tomasz A."/>
            <person name="Richardson P."/>
        </authorList>
    </citation>
    <scope>NUCLEOTIDE SEQUENCE [LARGE SCALE GENOMIC DNA]</scope>
    <source>
        <strain>JH9</strain>
    </source>
</reference>
<comment type="function">
    <text evidence="1">Cell wall formation. Catalyzes the transfer of a GlcNAc subunit on undecaprenyl-pyrophosphoryl-MurNAc-pentapeptide (lipid intermediate I) to form undecaprenyl-pyrophosphoryl-MurNAc-(pentapeptide)GlcNAc (lipid intermediate II).</text>
</comment>
<comment type="catalytic activity">
    <reaction evidence="1">
        <text>Mur2Ac(oyl-L-Ala-gamma-D-Glu-L-Lys-D-Ala-D-Ala)-di-trans,octa-cis-undecaprenyl diphosphate + UDP-N-acetyl-alpha-D-glucosamine = beta-D-GlcNAc-(1-&gt;4)-Mur2Ac(oyl-L-Ala-gamma-D-Glu-L-Lys-D-Ala-D-Ala)-di-trans,octa-cis-undecaprenyl diphosphate + UDP + H(+)</text>
        <dbReference type="Rhea" id="RHEA:23192"/>
        <dbReference type="ChEBI" id="CHEBI:15378"/>
        <dbReference type="ChEBI" id="CHEBI:57705"/>
        <dbReference type="ChEBI" id="CHEBI:58223"/>
        <dbReference type="ChEBI" id="CHEBI:60032"/>
        <dbReference type="ChEBI" id="CHEBI:60033"/>
        <dbReference type="EC" id="2.4.1.227"/>
    </reaction>
</comment>
<comment type="pathway">
    <text evidence="1">Cell wall biogenesis; peptidoglycan biosynthesis.</text>
</comment>
<comment type="subcellular location">
    <subcellularLocation>
        <location evidence="1">Cell membrane</location>
        <topology evidence="1">Peripheral membrane protein</topology>
        <orientation evidence="1">Cytoplasmic side</orientation>
    </subcellularLocation>
</comment>
<comment type="similarity">
    <text evidence="1">Belongs to the glycosyltransferase 28 family. MurG subfamily.</text>
</comment>
<sequence>MTKIAFTGGGTVGHVSVNLSLIPTALSQGYEALYIGSKNGIEREMIESQLPEIKYYPISSGKLRRYISLENAKDVFKVLKGILDARKVLKKEKPDLLFSKGGFVSVPVVIAAKSLNIPTIIHESDLTPGLANKIALKFAKKIYTTFEETLNYLPKEKADFIGATIREDLKNGNAHNGYQLTGFNENKKVLLVMGGSLGSKKLNSIIRENLDALLQQYQVIHLTGKGLKDAQVKKSGYIQYEFVKEDLTDLLAITDTVISRAGSNAIYEFLTLRIPMLLVPLGLDQSRGDQIDNANHFADKGYAKTIDEEQLTAQILLQELNEMEQERTRIINNMKSYEQSYTKEALFDKMIKDALN</sequence>
<evidence type="ECO:0000255" key="1">
    <source>
        <dbReference type="HAMAP-Rule" id="MF_00033"/>
    </source>
</evidence>
<gene>
    <name evidence="1" type="primary">murG</name>
    <name type="ordered locus">SaurJH9_1478</name>
</gene>
<protein>
    <recommendedName>
        <fullName evidence="1">UDP-N-acetylglucosamine--N-acetylmuramyl-(pentapeptide) pyrophosphoryl-undecaprenol N-acetylglucosamine transferase</fullName>
        <ecNumber evidence="1">2.4.1.227</ecNumber>
    </recommendedName>
    <alternativeName>
        <fullName evidence="1">Undecaprenyl-PP-MurNAc-pentapeptide-UDPGlcNAc GlcNAc transferase</fullName>
    </alternativeName>
</protein>
<organism>
    <name type="scientific">Staphylococcus aureus (strain JH9)</name>
    <dbReference type="NCBI Taxonomy" id="359786"/>
    <lineage>
        <taxon>Bacteria</taxon>
        <taxon>Bacillati</taxon>
        <taxon>Bacillota</taxon>
        <taxon>Bacilli</taxon>
        <taxon>Bacillales</taxon>
        <taxon>Staphylococcaceae</taxon>
        <taxon>Staphylococcus</taxon>
    </lineage>
</organism>
<name>MURG_STAA9</name>
<keyword id="KW-0131">Cell cycle</keyword>
<keyword id="KW-0132">Cell division</keyword>
<keyword id="KW-1003">Cell membrane</keyword>
<keyword id="KW-0133">Cell shape</keyword>
<keyword id="KW-0961">Cell wall biogenesis/degradation</keyword>
<keyword id="KW-0328">Glycosyltransferase</keyword>
<keyword id="KW-0472">Membrane</keyword>
<keyword id="KW-0573">Peptidoglycan synthesis</keyword>
<keyword id="KW-0808">Transferase</keyword>
<proteinExistence type="inferred from homology"/>
<feature type="chain" id="PRO_1000074474" description="UDP-N-acetylglucosamine--N-acetylmuramyl-(pentapeptide) pyrophosphoryl-undecaprenol N-acetylglucosamine transferase">
    <location>
        <begin position="1"/>
        <end position="356"/>
    </location>
</feature>
<feature type="binding site" evidence="1">
    <location>
        <position position="166"/>
    </location>
    <ligand>
        <name>UDP-N-acetyl-alpha-D-glucosamine</name>
        <dbReference type="ChEBI" id="CHEBI:57705"/>
    </ligand>
</feature>
<feature type="binding site" evidence="1">
    <location>
        <position position="196"/>
    </location>
    <ligand>
        <name>UDP-N-acetyl-alpha-D-glucosamine</name>
        <dbReference type="ChEBI" id="CHEBI:57705"/>
    </ligand>
</feature>
<feature type="binding site" evidence="1">
    <location>
        <position position="290"/>
    </location>
    <ligand>
        <name>UDP-N-acetyl-alpha-D-glucosamine</name>
        <dbReference type="ChEBI" id="CHEBI:57705"/>
    </ligand>
</feature>
<accession>A5ISU9</accession>
<dbReference type="EC" id="2.4.1.227" evidence="1"/>
<dbReference type="EMBL" id="CP000703">
    <property type="protein sequence ID" value="ABQ49272.1"/>
    <property type="molecule type" value="Genomic_DNA"/>
</dbReference>
<dbReference type="RefSeq" id="WP_000160906.1">
    <property type="nucleotide sequence ID" value="NC_009487.1"/>
</dbReference>
<dbReference type="SMR" id="A5ISU9"/>
<dbReference type="CAZy" id="GT28">
    <property type="family name" value="Glycosyltransferase Family 28"/>
</dbReference>
<dbReference type="KEGG" id="saj:SaurJH9_1478"/>
<dbReference type="HOGENOM" id="CLU_037404_0_0_9"/>
<dbReference type="UniPathway" id="UPA00219"/>
<dbReference type="GO" id="GO:0005886">
    <property type="term" value="C:plasma membrane"/>
    <property type="evidence" value="ECO:0007669"/>
    <property type="project" value="UniProtKB-SubCell"/>
</dbReference>
<dbReference type="GO" id="GO:0050511">
    <property type="term" value="F:undecaprenyldiphospho-muramoylpentapeptide beta-N-acetylglucosaminyltransferase activity"/>
    <property type="evidence" value="ECO:0007669"/>
    <property type="project" value="UniProtKB-UniRule"/>
</dbReference>
<dbReference type="GO" id="GO:0005975">
    <property type="term" value="P:carbohydrate metabolic process"/>
    <property type="evidence" value="ECO:0007669"/>
    <property type="project" value="InterPro"/>
</dbReference>
<dbReference type="GO" id="GO:0051301">
    <property type="term" value="P:cell division"/>
    <property type="evidence" value="ECO:0007669"/>
    <property type="project" value="UniProtKB-KW"/>
</dbReference>
<dbReference type="GO" id="GO:0071555">
    <property type="term" value="P:cell wall organization"/>
    <property type="evidence" value="ECO:0007669"/>
    <property type="project" value="UniProtKB-KW"/>
</dbReference>
<dbReference type="GO" id="GO:0030259">
    <property type="term" value="P:lipid glycosylation"/>
    <property type="evidence" value="ECO:0007669"/>
    <property type="project" value="UniProtKB-UniRule"/>
</dbReference>
<dbReference type="GO" id="GO:0009252">
    <property type="term" value="P:peptidoglycan biosynthetic process"/>
    <property type="evidence" value="ECO:0007669"/>
    <property type="project" value="UniProtKB-UniRule"/>
</dbReference>
<dbReference type="GO" id="GO:0008360">
    <property type="term" value="P:regulation of cell shape"/>
    <property type="evidence" value="ECO:0007669"/>
    <property type="project" value="UniProtKB-KW"/>
</dbReference>
<dbReference type="CDD" id="cd03785">
    <property type="entry name" value="GT28_MurG"/>
    <property type="match status" value="1"/>
</dbReference>
<dbReference type="Gene3D" id="3.40.50.2000">
    <property type="entry name" value="Glycogen Phosphorylase B"/>
    <property type="match status" value="2"/>
</dbReference>
<dbReference type="HAMAP" id="MF_00033">
    <property type="entry name" value="MurG"/>
    <property type="match status" value="1"/>
</dbReference>
<dbReference type="InterPro" id="IPR006009">
    <property type="entry name" value="GlcNAc_MurG"/>
</dbReference>
<dbReference type="InterPro" id="IPR007235">
    <property type="entry name" value="Glyco_trans_28_C"/>
</dbReference>
<dbReference type="InterPro" id="IPR004276">
    <property type="entry name" value="GlycoTrans_28_N"/>
</dbReference>
<dbReference type="NCBIfam" id="NF009102">
    <property type="entry name" value="PRK12446.1"/>
    <property type="match status" value="1"/>
</dbReference>
<dbReference type="PANTHER" id="PTHR21015:SF27">
    <property type="entry name" value="UDP-N-ACETYLGLUCOSAMINE--N-ACETYLMURAMYL-(PENTAPEPTIDE) PYROPHOSPHORYL-UNDECAPRENOL N-ACETYLGLUCOSAMINE TRANSFERASE"/>
    <property type="match status" value="1"/>
</dbReference>
<dbReference type="PANTHER" id="PTHR21015">
    <property type="entry name" value="UDP-N-ACETYLGLUCOSAMINE--N-ACETYLMURAMYL-(PENTAPEPTIDE) PYROPHOSPHORYL-UNDECAPRENOL N-ACETYLGLUCOSAMINE TRANSFERASE 1"/>
    <property type="match status" value="1"/>
</dbReference>
<dbReference type="Pfam" id="PF04101">
    <property type="entry name" value="Glyco_tran_28_C"/>
    <property type="match status" value="1"/>
</dbReference>
<dbReference type="Pfam" id="PF03033">
    <property type="entry name" value="Glyco_transf_28"/>
    <property type="match status" value="1"/>
</dbReference>
<dbReference type="SUPFAM" id="SSF53756">
    <property type="entry name" value="UDP-Glycosyltransferase/glycogen phosphorylase"/>
    <property type="match status" value="1"/>
</dbReference>